<reference key="1">
    <citation type="journal article" date="2004" name="Science">
        <title>The Ashbya gossypii genome as a tool for mapping the ancient Saccharomyces cerevisiae genome.</title>
        <authorList>
            <person name="Dietrich F.S."/>
            <person name="Voegeli S."/>
            <person name="Brachat S."/>
            <person name="Lerch A."/>
            <person name="Gates K."/>
            <person name="Steiner S."/>
            <person name="Mohr C."/>
            <person name="Poehlmann R."/>
            <person name="Luedi P."/>
            <person name="Choi S."/>
            <person name="Wing R.A."/>
            <person name="Flavier A."/>
            <person name="Gaffney T.D."/>
            <person name="Philippsen P."/>
        </authorList>
    </citation>
    <scope>NUCLEOTIDE SEQUENCE [LARGE SCALE GENOMIC DNA]</scope>
    <source>
        <strain>ATCC 10895 / CBS 109.51 / FGSC 9923 / NRRL Y-1056</strain>
    </source>
</reference>
<reference key="2">
    <citation type="journal article" date="2013" name="G3 (Bethesda)">
        <title>Genomes of Ashbya fungi isolated from insects reveal four mating-type loci, numerous translocations, lack of transposons, and distinct gene duplications.</title>
        <authorList>
            <person name="Dietrich F.S."/>
            <person name="Voegeli S."/>
            <person name="Kuo S."/>
            <person name="Philippsen P."/>
        </authorList>
    </citation>
    <scope>GENOME REANNOTATION</scope>
    <source>
        <strain>ATCC 10895 / CBS 109.51 / FGSC 9923 / NRRL Y-1056</strain>
    </source>
</reference>
<feature type="transit peptide" description="Mitochondrion" evidence="1">
    <location>
        <begin position="1"/>
        <end position="14"/>
    </location>
</feature>
<feature type="chain" id="PRO_0000402871" description="Translation factor GUF1, mitochondrial">
    <location>
        <begin position="15"/>
        <end position="644"/>
    </location>
</feature>
<feature type="domain" description="tr-type G">
    <location>
        <begin position="46"/>
        <end position="227"/>
    </location>
</feature>
<feature type="binding site" evidence="1">
    <location>
        <begin position="55"/>
        <end position="62"/>
    </location>
    <ligand>
        <name>GTP</name>
        <dbReference type="ChEBI" id="CHEBI:37565"/>
    </ligand>
</feature>
<feature type="binding site" evidence="1">
    <location>
        <begin position="120"/>
        <end position="124"/>
    </location>
    <ligand>
        <name>GTP</name>
        <dbReference type="ChEBI" id="CHEBI:37565"/>
    </ligand>
</feature>
<feature type="binding site" evidence="1">
    <location>
        <begin position="174"/>
        <end position="177"/>
    </location>
    <ligand>
        <name>GTP</name>
        <dbReference type="ChEBI" id="CHEBI:37565"/>
    </ligand>
</feature>
<proteinExistence type="inferred from homology"/>
<evidence type="ECO:0000255" key="1">
    <source>
        <dbReference type="HAMAP-Rule" id="MF_03137"/>
    </source>
</evidence>
<evidence type="ECO:0000305" key="2"/>
<protein>
    <recommendedName>
        <fullName evidence="1">Translation factor GUF1, mitochondrial</fullName>
        <ecNumber>3.6.5.-</ecNumber>
    </recommendedName>
    <alternativeName>
        <fullName evidence="1">Elongation factor 4 homolog</fullName>
        <shortName evidence="1">EF-4</shortName>
    </alternativeName>
    <alternativeName>
        <fullName evidence="1">GTPase GUF1</fullName>
    </alternativeName>
    <alternativeName>
        <fullName evidence="1">Ribosomal back-translocase</fullName>
    </alternativeName>
</protein>
<organism>
    <name type="scientific">Eremothecium gossypii (strain ATCC 10895 / CBS 109.51 / FGSC 9923 / NRRL Y-1056)</name>
    <name type="common">Yeast</name>
    <name type="synonym">Ashbya gossypii</name>
    <dbReference type="NCBI Taxonomy" id="284811"/>
    <lineage>
        <taxon>Eukaryota</taxon>
        <taxon>Fungi</taxon>
        <taxon>Dikarya</taxon>
        <taxon>Ascomycota</taxon>
        <taxon>Saccharomycotina</taxon>
        <taxon>Saccharomycetes</taxon>
        <taxon>Saccharomycetales</taxon>
        <taxon>Saccharomycetaceae</taxon>
        <taxon>Eremothecium</taxon>
    </lineage>
</organism>
<dbReference type="EC" id="3.6.5.-"/>
<dbReference type="EMBL" id="AE016820">
    <property type="protein sequence ID" value="AAS54780.1"/>
    <property type="molecule type" value="Genomic_DNA"/>
</dbReference>
<dbReference type="RefSeq" id="NP_986956.1">
    <property type="nucleotide sequence ID" value="NM_212018.1"/>
</dbReference>
<dbReference type="SMR" id="Q74ZG2"/>
<dbReference type="FunCoup" id="Q74ZG2">
    <property type="interactions" value="742"/>
</dbReference>
<dbReference type="STRING" id="284811.Q74ZG2"/>
<dbReference type="EnsemblFungi" id="AAS54780">
    <property type="protein sequence ID" value="AAS54780"/>
    <property type="gene ID" value="AGOS_AGR290W"/>
</dbReference>
<dbReference type="GeneID" id="4623258"/>
<dbReference type="KEGG" id="ago:AGOS_AGR290W"/>
<dbReference type="eggNOG" id="KOG0462">
    <property type="taxonomic scope" value="Eukaryota"/>
</dbReference>
<dbReference type="HOGENOM" id="CLU_009995_3_1_1"/>
<dbReference type="InParanoid" id="Q74ZG2"/>
<dbReference type="OMA" id="QVKCDEN"/>
<dbReference type="OrthoDB" id="1074at2759"/>
<dbReference type="Proteomes" id="UP000000591">
    <property type="component" value="Chromosome VII"/>
</dbReference>
<dbReference type="GO" id="GO:0005743">
    <property type="term" value="C:mitochondrial inner membrane"/>
    <property type="evidence" value="ECO:0007669"/>
    <property type="project" value="UniProtKB-SubCell"/>
</dbReference>
<dbReference type="GO" id="GO:0005759">
    <property type="term" value="C:mitochondrial matrix"/>
    <property type="evidence" value="ECO:0007669"/>
    <property type="project" value="UniProtKB-UniRule"/>
</dbReference>
<dbReference type="GO" id="GO:0005739">
    <property type="term" value="C:mitochondrion"/>
    <property type="evidence" value="ECO:0000318"/>
    <property type="project" value="GO_Central"/>
</dbReference>
<dbReference type="GO" id="GO:0005525">
    <property type="term" value="F:GTP binding"/>
    <property type="evidence" value="ECO:0007669"/>
    <property type="project" value="UniProtKB-UniRule"/>
</dbReference>
<dbReference type="GO" id="GO:0003924">
    <property type="term" value="F:GTPase activity"/>
    <property type="evidence" value="ECO:0007669"/>
    <property type="project" value="UniProtKB-UniRule"/>
</dbReference>
<dbReference type="GO" id="GO:0097177">
    <property type="term" value="F:mitochondrial ribosome binding"/>
    <property type="evidence" value="ECO:0000318"/>
    <property type="project" value="GO_Central"/>
</dbReference>
<dbReference type="GO" id="GO:0045727">
    <property type="term" value="P:positive regulation of translation"/>
    <property type="evidence" value="ECO:0000318"/>
    <property type="project" value="GO_Central"/>
</dbReference>
<dbReference type="GO" id="GO:0006412">
    <property type="term" value="P:translation"/>
    <property type="evidence" value="ECO:0007669"/>
    <property type="project" value="UniProtKB-KW"/>
</dbReference>
<dbReference type="CDD" id="cd03699">
    <property type="entry name" value="EF4_II"/>
    <property type="match status" value="1"/>
</dbReference>
<dbReference type="CDD" id="cd16260">
    <property type="entry name" value="EF4_III"/>
    <property type="match status" value="1"/>
</dbReference>
<dbReference type="CDD" id="cd01890">
    <property type="entry name" value="LepA"/>
    <property type="match status" value="1"/>
</dbReference>
<dbReference type="CDD" id="cd03709">
    <property type="entry name" value="lepA_C"/>
    <property type="match status" value="1"/>
</dbReference>
<dbReference type="FunFam" id="3.40.50.300:FF:000078">
    <property type="entry name" value="Elongation factor 4"/>
    <property type="match status" value="1"/>
</dbReference>
<dbReference type="FunFam" id="2.40.30.10:FF:000015">
    <property type="entry name" value="Translation factor GUF1, mitochondrial"/>
    <property type="match status" value="1"/>
</dbReference>
<dbReference type="FunFam" id="3.30.70.240:FF:000007">
    <property type="entry name" value="Translation factor GUF1, mitochondrial"/>
    <property type="match status" value="1"/>
</dbReference>
<dbReference type="FunFam" id="3.30.70.2570:FF:000001">
    <property type="entry name" value="Translation factor GUF1, mitochondrial"/>
    <property type="match status" value="1"/>
</dbReference>
<dbReference type="FunFam" id="3.30.70.870:FF:000004">
    <property type="entry name" value="Translation factor GUF1, mitochondrial"/>
    <property type="match status" value="1"/>
</dbReference>
<dbReference type="Gene3D" id="3.30.70.240">
    <property type="match status" value="1"/>
</dbReference>
<dbReference type="Gene3D" id="3.30.70.2570">
    <property type="entry name" value="Elongation factor 4, C-terminal domain"/>
    <property type="match status" value="1"/>
</dbReference>
<dbReference type="Gene3D" id="3.30.70.870">
    <property type="entry name" value="Elongation Factor G (Translational Gtpase), domain 3"/>
    <property type="match status" value="1"/>
</dbReference>
<dbReference type="Gene3D" id="3.40.50.300">
    <property type="entry name" value="P-loop containing nucleotide triphosphate hydrolases"/>
    <property type="match status" value="1"/>
</dbReference>
<dbReference type="Gene3D" id="2.40.30.10">
    <property type="entry name" value="Translation factors"/>
    <property type="match status" value="1"/>
</dbReference>
<dbReference type="HAMAP" id="MF_00071">
    <property type="entry name" value="LepA"/>
    <property type="match status" value="1"/>
</dbReference>
<dbReference type="InterPro" id="IPR006297">
    <property type="entry name" value="EF-4"/>
</dbReference>
<dbReference type="InterPro" id="IPR035647">
    <property type="entry name" value="EFG_III/V"/>
</dbReference>
<dbReference type="InterPro" id="IPR000640">
    <property type="entry name" value="EFG_V-like"/>
</dbReference>
<dbReference type="InterPro" id="IPR004161">
    <property type="entry name" value="EFTu-like_2"/>
</dbReference>
<dbReference type="InterPro" id="IPR031157">
    <property type="entry name" value="G_TR_CS"/>
</dbReference>
<dbReference type="InterPro" id="IPR038363">
    <property type="entry name" value="LepA_C_sf"/>
</dbReference>
<dbReference type="InterPro" id="IPR013842">
    <property type="entry name" value="LepA_CTD"/>
</dbReference>
<dbReference type="InterPro" id="IPR035654">
    <property type="entry name" value="LepA_IV"/>
</dbReference>
<dbReference type="InterPro" id="IPR027417">
    <property type="entry name" value="P-loop_NTPase"/>
</dbReference>
<dbReference type="InterPro" id="IPR005225">
    <property type="entry name" value="Small_GTP-bd"/>
</dbReference>
<dbReference type="InterPro" id="IPR000795">
    <property type="entry name" value="T_Tr_GTP-bd_dom"/>
</dbReference>
<dbReference type="InterPro" id="IPR009000">
    <property type="entry name" value="Transl_B-barrel_sf"/>
</dbReference>
<dbReference type="NCBIfam" id="TIGR01393">
    <property type="entry name" value="lepA"/>
    <property type="match status" value="1"/>
</dbReference>
<dbReference type="NCBIfam" id="TIGR00231">
    <property type="entry name" value="small_GTP"/>
    <property type="match status" value="1"/>
</dbReference>
<dbReference type="PANTHER" id="PTHR43512:SF7">
    <property type="entry name" value="TRANSLATION FACTOR GUF1, MITOCHONDRIAL"/>
    <property type="match status" value="1"/>
</dbReference>
<dbReference type="PANTHER" id="PTHR43512">
    <property type="entry name" value="TRANSLATION FACTOR GUF1-RELATED"/>
    <property type="match status" value="1"/>
</dbReference>
<dbReference type="Pfam" id="PF00679">
    <property type="entry name" value="EFG_C"/>
    <property type="match status" value="1"/>
</dbReference>
<dbReference type="Pfam" id="PF00009">
    <property type="entry name" value="GTP_EFTU"/>
    <property type="match status" value="1"/>
</dbReference>
<dbReference type="Pfam" id="PF03144">
    <property type="entry name" value="GTP_EFTU_D2"/>
    <property type="match status" value="1"/>
</dbReference>
<dbReference type="Pfam" id="PF06421">
    <property type="entry name" value="LepA_C"/>
    <property type="match status" value="1"/>
</dbReference>
<dbReference type="PRINTS" id="PR00315">
    <property type="entry name" value="ELONGATNFCT"/>
</dbReference>
<dbReference type="SUPFAM" id="SSF54980">
    <property type="entry name" value="EF-G C-terminal domain-like"/>
    <property type="match status" value="2"/>
</dbReference>
<dbReference type="SUPFAM" id="SSF52540">
    <property type="entry name" value="P-loop containing nucleoside triphosphate hydrolases"/>
    <property type="match status" value="1"/>
</dbReference>
<dbReference type="SUPFAM" id="SSF50447">
    <property type="entry name" value="Translation proteins"/>
    <property type="match status" value="1"/>
</dbReference>
<dbReference type="PROSITE" id="PS00301">
    <property type="entry name" value="G_TR_1"/>
    <property type="match status" value="1"/>
</dbReference>
<dbReference type="PROSITE" id="PS51722">
    <property type="entry name" value="G_TR_2"/>
    <property type="match status" value="1"/>
</dbReference>
<keyword id="KW-0342">GTP-binding</keyword>
<keyword id="KW-0378">Hydrolase</keyword>
<keyword id="KW-0472">Membrane</keyword>
<keyword id="KW-0496">Mitochondrion</keyword>
<keyword id="KW-0999">Mitochondrion inner membrane</keyword>
<keyword id="KW-0547">Nucleotide-binding</keyword>
<keyword id="KW-0648">Protein biosynthesis</keyword>
<keyword id="KW-1185">Reference proteome</keyword>
<keyword id="KW-0809">Transit peptide</keyword>
<accession>Q74ZG2</accession>
<comment type="function">
    <text evidence="1">Promotes mitochondrial protein synthesis. May act as a fidelity factor of the translation reaction, by catalyzing a one-codon backward translocation of tRNAs on improperly translocated ribosomes. Binds to mitochondrial ribosomes in a GTP-dependent manner.</text>
</comment>
<comment type="catalytic activity">
    <reaction evidence="1">
        <text>GTP + H2O = GDP + phosphate + H(+)</text>
        <dbReference type="Rhea" id="RHEA:19669"/>
        <dbReference type="ChEBI" id="CHEBI:15377"/>
        <dbReference type="ChEBI" id="CHEBI:15378"/>
        <dbReference type="ChEBI" id="CHEBI:37565"/>
        <dbReference type="ChEBI" id="CHEBI:43474"/>
        <dbReference type="ChEBI" id="CHEBI:58189"/>
    </reaction>
</comment>
<comment type="subcellular location">
    <subcellularLocation>
        <location evidence="1">Mitochondrion inner membrane</location>
        <topology evidence="1">Peripheral membrane protein</topology>
        <orientation evidence="1">Matrix side</orientation>
    </subcellularLocation>
</comment>
<comment type="similarity">
    <text evidence="2">Belongs to the TRAFAC class translation factor GTPase superfamily. Classic translation factor GTPase family. LepA subfamily.</text>
</comment>
<gene>
    <name evidence="1" type="primary">GUF1</name>
    <name type="ordered locus">AGR290W</name>
</gene>
<name>GUF1_EREGS</name>
<sequence>MLRKAFRYLVPVRCKSNSSIAGASTAGTSPSLPQTLQRRIEEIPLERYRNFSIVAHVDHGKSTLSDRLLELTGVVKPGAKQVLDKLEVERERGITVKAQTCSMFYHDKRTGLDYLLHLVDTPGHVDFRSEVSRSYASCGGALLLVDASQGVQAQTVANFYLAYSMNLKLLPVINKIDLSVANIAQAEDQVEDMFELPREDIVRVSAKTGLNVADLLPAIVDRIPPPTGYVEKPFRALLVDSWYDSYLGVVLLVYCVDGMVKKGDKIVSAHTSNKYEVKEVGIMYPERVATGKLSTGQVGYLVPGFKNSRDAKIGDTLMHQGRESETEVLPGFEEQKPMVFVGAFPADGAEFKALDDDIQRLVLNDRSVTLQRETSNALGQGWRLGFLGSLHASVFKERLENEYGSKLIITQPTVPYVVEYSDGTQITVTNPDDFPDLTLRRTKIKNFQEPYVEAIMTLPQDYLGRVITLCDDNRGIQKEITYINTTGQVMLKYDIPLAHLVDDFFGKLKSVTHGYASLDYEDAGYKPSDIVKMELLVNGKGVDALAQVMHRSQTERVAKEWVRKFKQYVKSQLYEVVIQAKANNKVLARETIKARRKDVLAKLHASDVSRRKKLLVKQKEGKKQMRSIGNVHIDQEAYQAFLRK</sequence>